<gene>
    <name type="ordered locus">YLR257W</name>
</gene>
<reference key="1">
    <citation type="journal article" date="1997" name="Nature">
        <title>The nucleotide sequence of Saccharomyces cerevisiae chromosome XII.</title>
        <authorList>
            <person name="Johnston M."/>
            <person name="Hillier L.W."/>
            <person name="Riles L."/>
            <person name="Albermann K."/>
            <person name="Andre B."/>
            <person name="Ansorge W."/>
            <person name="Benes V."/>
            <person name="Brueckner M."/>
            <person name="Delius H."/>
            <person name="Dubois E."/>
            <person name="Duesterhoeft A."/>
            <person name="Entian K.-D."/>
            <person name="Floeth M."/>
            <person name="Goffeau A."/>
            <person name="Hebling U."/>
            <person name="Heumann K."/>
            <person name="Heuss-Neitzel D."/>
            <person name="Hilbert H."/>
            <person name="Hilger F."/>
            <person name="Kleine K."/>
            <person name="Koetter P."/>
            <person name="Louis E.J."/>
            <person name="Messenguy F."/>
            <person name="Mewes H.-W."/>
            <person name="Miosga T."/>
            <person name="Moestl D."/>
            <person name="Mueller-Auer S."/>
            <person name="Nentwich U."/>
            <person name="Obermaier B."/>
            <person name="Piravandi E."/>
            <person name="Pohl T.M."/>
            <person name="Portetelle D."/>
            <person name="Purnelle B."/>
            <person name="Rechmann S."/>
            <person name="Rieger M."/>
            <person name="Rinke M."/>
            <person name="Rose M."/>
            <person name="Scharfe M."/>
            <person name="Scherens B."/>
            <person name="Scholler P."/>
            <person name="Schwager C."/>
            <person name="Schwarz S."/>
            <person name="Underwood A.P."/>
            <person name="Urrestarazu L.A."/>
            <person name="Vandenbol M."/>
            <person name="Verhasselt P."/>
            <person name="Vierendeels F."/>
            <person name="Voet M."/>
            <person name="Volckaert G."/>
            <person name="Voss H."/>
            <person name="Wambutt R."/>
            <person name="Wedler E."/>
            <person name="Wedler H."/>
            <person name="Zimmermann F.K."/>
            <person name="Zollner A."/>
            <person name="Hani J."/>
            <person name="Hoheisel J.D."/>
        </authorList>
    </citation>
    <scope>NUCLEOTIDE SEQUENCE [LARGE SCALE GENOMIC DNA]</scope>
    <source>
        <strain>ATCC 204508 / S288c</strain>
    </source>
</reference>
<reference key="2">
    <citation type="journal article" date="2014" name="G3 (Bethesda)">
        <title>The reference genome sequence of Saccharomyces cerevisiae: Then and now.</title>
        <authorList>
            <person name="Engel S.R."/>
            <person name="Dietrich F.S."/>
            <person name="Fisk D.G."/>
            <person name="Binkley G."/>
            <person name="Balakrishnan R."/>
            <person name="Costanzo M.C."/>
            <person name="Dwight S.S."/>
            <person name="Hitz B.C."/>
            <person name="Karra K."/>
            <person name="Nash R.S."/>
            <person name="Weng S."/>
            <person name="Wong E.D."/>
            <person name="Lloyd P."/>
            <person name="Skrzypek M.S."/>
            <person name="Miyasato S.R."/>
            <person name="Simison M."/>
            <person name="Cherry J.M."/>
        </authorList>
    </citation>
    <scope>GENOME REANNOTATION</scope>
    <source>
        <strain>ATCC 204508 / S288c</strain>
    </source>
</reference>
<reference key="3">
    <citation type="journal article" date="2007" name="Genome Res.">
        <title>Approaching a complete repository of sequence-verified protein-encoding clones for Saccharomyces cerevisiae.</title>
        <authorList>
            <person name="Hu Y."/>
            <person name="Rolfs A."/>
            <person name="Bhullar B."/>
            <person name="Murthy T.V.S."/>
            <person name="Zhu C."/>
            <person name="Berger M.F."/>
            <person name="Camargo A.A."/>
            <person name="Kelley F."/>
            <person name="McCarron S."/>
            <person name="Jepson D."/>
            <person name="Richardson A."/>
            <person name="Raphael J."/>
            <person name="Moreira D."/>
            <person name="Taycher E."/>
            <person name="Zuo D."/>
            <person name="Mohr S."/>
            <person name="Kane M.F."/>
            <person name="Williamson J."/>
            <person name="Simpson A.J.G."/>
            <person name="Bulyk M.L."/>
            <person name="Harlow E."/>
            <person name="Marsischky G."/>
            <person name="Kolodner R.D."/>
            <person name="LaBaer J."/>
        </authorList>
    </citation>
    <scope>NUCLEOTIDE SEQUENCE [GENOMIC DNA]</scope>
    <source>
        <strain>ATCC 204508 / S288c</strain>
    </source>
</reference>
<reference key="4">
    <citation type="journal article" date="2003" name="Nature">
        <title>Global analysis of protein localization in budding yeast.</title>
        <authorList>
            <person name="Huh W.-K."/>
            <person name="Falvo J.V."/>
            <person name="Gerke L.C."/>
            <person name="Carroll A.S."/>
            <person name="Howson R.W."/>
            <person name="Weissman J.S."/>
            <person name="O'Shea E.K."/>
        </authorList>
    </citation>
    <scope>SUBCELLULAR LOCATION [LARGE SCALE ANALYSIS]</scope>
</reference>
<reference key="5">
    <citation type="journal article" date="2003" name="Nature">
        <title>Global analysis of protein expression in yeast.</title>
        <authorList>
            <person name="Ghaemmaghami S."/>
            <person name="Huh W.-K."/>
            <person name="Bower K."/>
            <person name="Howson R.W."/>
            <person name="Belle A."/>
            <person name="Dephoure N."/>
            <person name="O'Shea E.K."/>
            <person name="Weissman J.S."/>
        </authorList>
    </citation>
    <scope>LEVEL OF PROTEIN EXPRESSION [LARGE SCALE ANALYSIS]</scope>
</reference>
<reference key="6">
    <citation type="journal article" date="2005" name="Mol. Cell. Proteomics">
        <title>Quantitative phosphoproteomics applied to the yeast pheromone signaling pathway.</title>
        <authorList>
            <person name="Gruhler A."/>
            <person name="Olsen J.V."/>
            <person name="Mohammed S."/>
            <person name="Mortensen P."/>
            <person name="Faergeman N.J."/>
            <person name="Mann M."/>
            <person name="Jensen O.N."/>
        </authorList>
    </citation>
    <scope>ACETYLATION [LARGE SCALE ANALYSIS] AT VAL-2</scope>
    <scope>PHOSPHORYLATION [LARGE SCALE ANALYSIS] AT SER-121</scope>
    <scope>CLEAVAGE OF INITIATOR METHIONINE [LARGE SCALE ANALYSIS]</scope>
    <scope>IDENTIFICATION BY MASS SPECTROMETRY [LARGE SCALE ANALYSIS]</scope>
    <source>
        <strain>YAL6B</strain>
    </source>
</reference>
<reference key="7">
    <citation type="journal article" date="2007" name="J. Proteome Res.">
        <title>Large-scale phosphorylation analysis of alpha-factor-arrested Saccharomyces cerevisiae.</title>
        <authorList>
            <person name="Li X."/>
            <person name="Gerber S.A."/>
            <person name="Rudner A.D."/>
            <person name="Beausoleil S.A."/>
            <person name="Haas W."/>
            <person name="Villen J."/>
            <person name="Elias J.E."/>
            <person name="Gygi S.P."/>
        </authorList>
    </citation>
    <scope>PHOSPHORYLATION [LARGE SCALE ANALYSIS] AT THR-44; SER-121 AND SER-129</scope>
    <scope>IDENTIFICATION BY MASS SPECTROMETRY [LARGE SCALE ANALYSIS]</scope>
    <source>
        <strain>ADR376</strain>
    </source>
</reference>
<reference key="8">
    <citation type="journal article" date="2007" name="Proc. Natl. Acad. Sci. U.S.A.">
        <title>Analysis of phosphorylation sites on proteins from Saccharomyces cerevisiae by electron transfer dissociation (ETD) mass spectrometry.</title>
        <authorList>
            <person name="Chi A."/>
            <person name="Huttenhower C."/>
            <person name="Geer L.Y."/>
            <person name="Coon J.J."/>
            <person name="Syka J.E.P."/>
            <person name="Bai D.L."/>
            <person name="Shabanowitz J."/>
            <person name="Burke D.J."/>
            <person name="Troyanskaya O.G."/>
            <person name="Hunt D.F."/>
        </authorList>
    </citation>
    <scope>PHOSPHORYLATION [LARGE SCALE ANALYSIS] AT SER-238; SER-240 AND SER-242</scope>
    <scope>IDENTIFICATION BY MASS SPECTROMETRY [LARGE SCALE ANALYSIS]</scope>
</reference>
<reference key="9">
    <citation type="journal article" date="2008" name="Mol. Cell. Proteomics">
        <title>A multidimensional chromatography technology for in-depth phosphoproteome analysis.</title>
        <authorList>
            <person name="Albuquerque C.P."/>
            <person name="Smolka M.B."/>
            <person name="Payne S.H."/>
            <person name="Bafna V."/>
            <person name="Eng J."/>
            <person name="Zhou H."/>
        </authorList>
    </citation>
    <scope>PHOSPHORYLATION [LARGE SCALE ANALYSIS] AT SER-121; SER-137; SER-139; THR-159 AND SER-270</scope>
    <scope>IDENTIFICATION BY MASS SPECTROMETRY [LARGE SCALE ANALYSIS]</scope>
</reference>
<reference key="10">
    <citation type="journal article" date="2009" name="Science">
        <title>Global analysis of Cdk1 substrate phosphorylation sites provides insights into evolution.</title>
        <authorList>
            <person name="Holt L.J."/>
            <person name="Tuch B.B."/>
            <person name="Villen J."/>
            <person name="Johnson A.D."/>
            <person name="Gygi S.P."/>
            <person name="Morgan D.O."/>
        </authorList>
    </citation>
    <scope>PHOSPHORYLATION [LARGE SCALE ANALYSIS] AT THR-44; SER-49; SER-69; SER-121; SER-126; SER-129 AND SER-270</scope>
    <scope>IDENTIFICATION BY MASS SPECTROMETRY [LARGE SCALE ANALYSIS]</scope>
</reference>
<name>YL257_YEAST</name>
<dbReference type="EMBL" id="U17244">
    <property type="protein sequence ID" value="AAB67379.1"/>
    <property type="molecule type" value="Genomic_DNA"/>
</dbReference>
<dbReference type="EMBL" id="AY692605">
    <property type="protein sequence ID" value="AAT92624.1"/>
    <property type="molecule type" value="Genomic_DNA"/>
</dbReference>
<dbReference type="EMBL" id="BK006945">
    <property type="protein sequence ID" value="DAA09570.1"/>
    <property type="molecule type" value="Genomic_DNA"/>
</dbReference>
<dbReference type="PIR" id="S51395">
    <property type="entry name" value="S51395"/>
</dbReference>
<dbReference type="RefSeq" id="NP_013358.1">
    <property type="nucleotide sequence ID" value="NM_001182144.1"/>
</dbReference>
<dbReference type="BioGRID" id="31525">
    <property type="interactions" value="53"/>
</dbReference>
<dbReference type="DIP" id="DIP-4779N"/>
<dbReference type="FunCoup" id="Q06146">
    <property type="interactions" value="99"/>
</dbReference>
<dbReference type="IntAct" id="Q06146">
    <property type="interactions" value="12"/>
</dbReference>
<dbReference type="MINT" id="Q06146"/>
<dbReference type="STRING" id="4932.YLR257W"/>
<dbReference type="iPTMnet" id="Q06146"/>
<dbReference type="PaxDb" id="4932-YLR257W"/>
<dbReference type="PeptideAtlas" id="Q06146"/>
<dbReference type="TopDownProteomics" id="Q06146"/>
<dbReference type="EnsemblFungi" id="YLR257W_mRNA">
    <property type="protein sequence ID" value="YLR257W"/>
    <property type="gene ID" value="YLR257W"/>
</dbReference>
<dbReference type="GeneID" id="850961"/>
<dbReference type="KEGG" id="sce:YLR257W"/>
<dbReference type="AGR" id="SGD:S000004247"/>
<dbReference type="SGD" id="S000004247">
    <property type="gene designation" value="YLR257W"/>
</dbReference>
<dbReference type="VEuPathDB" id="FungiDB:YLR257W"/>
<dbReference type="eggNOG" id="ENOG502S0IJ">
    <property type="taxonomic scope" value="Eukaryota"/>
</dbReference>
<dbReference type="HOGENOM" id="CLU_060982_0_0_1"/>
<dbReference type="InParanoid" id="Q06146"/>
<dbReference type="OMA" id="DARMYST"/>
<dbReference type="OrthoDB" id="4068767at2759"/>
<dbReference type="BioCyc" id="YEAST:G3O-32360-MONOMER"/>
<dbReference type="BioGRID-ORCS" id="850961">
    <property type="hits" value="3 hits in 10 CRISPR screens"/>
</dbReference>
<dbReference type="PRO" id="PR:Q06146"/>
<dbReference type="Proteomes" id="UP000002311">
    <property type="component" value="Chromosome XII"/>
</dbReference>
<dbReference type="RNAct" id="Q06146">
    <property type="molecule type" value="protein"/>
</dbReference>
<dbReference type="GO" id="GO:0005737">
    <property type="term" value="C:cytoplasm"/>
    <property type="evidence" value="ECO:0007005"/>
    <property type="project" value="SGD"/>
</dbReference>
<sequence>MVDARGSTPCLIGDSIRNVNDGNSLDFQYTNQFNEESEASRLLTPQTSSNHALSKMQKDDDIRDRSYTSVAELNREGALLTDEVDLENVDASKVRSNRDDLEAEEKRKKLLLLKKKQRNKSINSESFSSPSLRASKSNSLITSTDPVEDHISKYSSSGTPENITGEADDEDEDIIRNSYGQMIKNNSNRPHLAKGESYQSAEQEIDHTAPEKSEKRQERSGRSFDRQKSSAEFLRSLSRSISRGPTKNKTVSPSKGEDSRMYSTSNYSISLVDLENGPKIIPETLEEEQEDAEKEGVLMEDEGNEEYTKDLEEAANKAQPQ</sequence>
<evidence type="ECO:0000256" key="1">
    <source>
        <dbReference type="SAM" id="MobiDB-lite"/>
    </source>
</evidence>
<evidence type="ECO:0000269" key="2">
    <source>
    </source>
</evidence>
<evidence type="ECO:0000269" key="3">
    <source>
    </source>
</evidence>
<evidence type="ECO:0007744" key="4">
    <source>
    </source>
</evidence>
<evidence type="ECO:0007744" key="5">
    <source>
    </source>
</evidence>
<evidence type="ECO:0007744" key="6">
    <source>
    </source>
</evidence>
<evidence type="ECO:0007744" key="7">
    <source>
    </source>
</evidence>
<evidence type="ECO:0007744" key="8">
    <source>
    </source>
</evidence>
<keyword id="KW-0007">Acetylation</keyword>
<keyword id="KW-0963">Cytoplasm</keyword>
<keyword id="KW-0597">Phosphoprotein</keyword>
<keyword id="KW-1185">Reference proteome</keyword>
<comment type="interaction">
    <interactant intactId="EBI-36149">
        <id>Q06146</id>
    </interactant>
    <interactant intactId="EBI-7727">
        <id>Q12680</id>
        <label>GLT1</label>
    </interactant>
    <organismsDiffer>false</organismsDiffer>
    <experiments>2</experiments>
</comment>
<comment type="subcellular location">
    <subcellularLocation>
        <location evidence="2">Cytoplasm</location>
    </subcellularLocation>
</comment>
<comment type="miscellaneous">
    <text evidence="3">Present with 18600 molecules/cell in log phase SD medium.</text>
</comment>
<protein>
    <recommendedName>
        <fullName>Uncharacterized protein YLR257W</fullName>
    </recommendedName>
</protein>
<feature type="initiator methionine" description="Removed" evidence="4">
    <location>
        <position position="1"/>
    </location>
</feature>
<feature type="chain" id="PRO_0000247208" description="Uncharacterized protein YLR257W">
    <location>
        <begin position="2"/>
        <end position="321"/>
    </location>
</feature>
<feature type="region of interest" description="Disordered" evidence="1">
    <location>
        <begin position="37"/>
        <end position="63"/>
    </location>
</feature>
<feature type="region of interest" description="Disordered" evidence="1">
    <location>
        <begin position="115"/>
        <end position="270"/>
    </location>
</feature>
<feature type="region of interest" description="Disordered" evidence="1">
    <location>
        <begin position="283"/>
        <end position="321"/>
    </location>
</feature>
<feature type="compositionally biased region" description="Polar residues" evidence="1">
    <location>
        <begin position="43"/>
        <end position="52"/>
    </location>
</feature>
<feature type="compositionally biased region" description="Polar residues" evidence="1">
    <location>
        <begin position="120"/>
        <end position="145"/>
    </location>
</feature>
<feature type="compositionally biased region" description="Polar residues" evidence="1">
    <location>
        <begin position="153"/>
        <end position="162"/>
    </location>
</feature>
<feature type="compositionally biased region" description="Polar residues" evidence="1">
    <location>
        <begin position="178"/>
        <end position="189"/>
    </location>
</feature>
<feature type="compositionally biased region" description="Basic and acidic residues" evidence="1">
    <location>
        <begin position="204"/>
        <end position="229"/>
    </location>
</feature>
<feature type="compositionally biased region" description="Polar residues" evidence="1">
    <location>
        <begin position="237"/>
        <end position="253"/>
    </location>
</feature>
<feature type="compositionally biased region" description="Acidic residues" evidence="1">
    <location>
        <begin position="284"/>
        <end position="305"/>
    </location>
</feature>
<feature type="compositionally biased region" description="Basic and acidic residues" evidence="1">
    <location>
        <begin position="306"/>
        <end position="315"/>
    </location>
</feature>
<feature type="modified residue" description="N-acetylvaline" evidence="4">
    <location>
        <position position="2"/>
    </location>
</feature>
<feature type="modified residue" description="Phosphothreonine" evidence="6 8">
    <location>
        <position position="44"/>
    </location>
</feature>
<feature type="modified residue" description="Phosphoserine" evidence="8">
    <location>
        <position position="49"/>
    </location>
</feature>
<feature type="modified residue" description="Phosphoserine" evidence="8">
    <location>
        <position position="69"/>
    </location>
</feature>
<feature type="modified residue" description="Phosphoserine" evidence="4 6 7 8">
    <location>
        <position position="121"/>
    </location>
</feature>
<feature type="modified residue" description="Phosphoserine" evidence="8">
    <location>
        <position position="126"/>
    </location>
</feature>
<feature type="modified residue" description="Phosphoserine" evidence="6 8">
    <location>
        <position position="129"/>
    </location>
</feature>
<feature type="modified residue" description="Phosphoserine" evidence="7">
    <location>
        <position position="137"/>
    </location>
</feature>
<feature type="modified residue" description="Phosphoserine" evidence="7">
    <location>
        <position position="139"/>
    </location>
</feature>
<feature type="modified residue" description="Phosphothreonine" evidence="7">
    <location>
        <position position="159"/>
    </location>
</feature>
<feature type="modified residue" description="Phosphoserine" evidence="5">
    <location>
        <position position="238"/>
    </location>
</feature>
<feature type="modified residue" description="Phosphoserine" evidence="5">
    <location>
        <position position="240"/>
    </location>
</feature>
<feature type="modified residue" description="Phosphoserine" evidence="5">
    <location>
        <position position="242"/>
    </location>
</feature>
<feature type="modified residue" description="Phosphoserine" evidence="7 8">
    <location>
        <position position="270"/>
    </location>
</feature>
<accession>Q06146</accession>
<accession>D6VYQ4</accession>
<organism>
    <name type="scientific">Saccharomyces cerevisiae (strain ATCC 204508 / S288c)</name>
    <name type="common">Baker's yeast</name>
    <dbReference type="NCBI Taxonomy" id="559292"/>
    <lineage>
        <taxon>Eukaryota</taxon>
        <taxon>Fungi</taxon>
        <taxon>Dikarya</taxon>
        <taxon>Ascomycota</taxon>
        <taxon>Saccharomycotina</taxon>
        <taxon>Saccharomycetes</taxon>
        <taxon>Saccharomycetales</taxon>
        <taxon>Saccharomycetaceae</taxon>
        <taxon>Saccharomyces</taxon>
    </lineage>
</organism>
<proteinExistence type="evidence at protein level"/>